<protein>
    <recommendedName>
        <fullName evidence="1">Small ribosomal subunit protein uS8</fullName>
    </recommendedName>
    <alternativeName>
        <fullName evidence="2">30S ribosomal protein S8</fullName>
    </alternativeName>
</protein>
<reference key="1">
    <citation type="submission" date="2006-11" db="EMBL/GenBank/DDBJ databases">
        <title>Sequence of Campylobacter fetus subsp. fetus 82-40.</title>
        <authorList>
            <person name="Fouts D.E."/>
            <person name="Nelson K.E."/>
        </authorList>
    </citation>
    <scope>NUCLEOTIDE SEQUENCE [LARGE SCALE GENOMIC DNA]</scope>
    <source>
        <strain>82-40</strain>
    </source>
</reference>
<dbReference type="EMBL" id="CP000487">
    <property type="protein sequence ID" value="ABK83415.1"/>
    <property type="molecule type" value="Genomic_DNA"/>
</dbReference>
<dbReference type="RefSeq" id="WP_002847989.1">
    <property type="nucleotide sequence ID" value="NC_008599.1"/>
</dbReference>
<dbReference type="SMR" id="A0RM25"/>
<dbReference type="GeneID" id="61063891"/>
<dbReference type="KEGG" id="cff:CFF8240_0048"/>
<dbReference type="eggNOG" id="COG0096">
    <property type="taxonomic scope" value="Bacteria"/>
</dbReference>
<dbReference type="HOGENOM" id="CLU_098428_0_2_7"/>
<dbReference type="Proteomes" id="UP000000760">
    <property type="component" value="Chromosome"/>
</dbReference>
<dbReference type="GO" id="GO:1990904">
    <property type="term" value="C:ribonucleoprotein complex"/>
    <property type="evidence" value="ECO:0007669"/>
    <property type="project" value="UniProtKB-KW"/>
</dbReference>
<dbReference type="GO" id="GO:0005840">
    <property type="term" value="C:ribosome"/>
    <property type="evidence" value="ECO:0007669"/>
    <property type="project" value="UniProtKB-KW"/>
</dbReference>
<dbReference type="GO" id="GO:0019843">
    <property type="term" value="F:rRNA binding"/>
    <property type="evidence" value="ECO:0007669"/>
    <property type="project" value="UniProtKB-UniRule"/>
</dbReference>
<dbReference type="GO" id="GO:0003735">
    <property type="term" value="F:structural constituent of ribosome"/>
    <property type="evidence" value="ECO:0007669"/>
    <property type="project" value="InterPro"/>
</dbReference>
<dbReference type="GO" id="GO:0006412">
    <property type="term" value="P:translation"/>
    <property type="evidence" value="ECO:0007669"/>
    <property type="project" value="UniProtKB-UniRule"/>
</dbReference>
<dbReference type="FunFam" id="3.30.1490.10:FF:000001">
    <property type="entry name" value="30S ribosomal protein S8"/>
    <property type="match status" value="1"/>
</dbReference>
<dbReference type="Gene3D" id="3.30.1370.30">
    <property type="match status" value="1"/>
</dbReference>
<dbReference type="Gene3D" id="3.30.1490.10">
    <property type="match status" value="1"/>
</dbReference>
<dbReference type="HAMAP" id="MF_01302_B">
    <property type="entry name" value="Ribosomal_uS8_B"/>
    <property type="match status" value="1"/>
</dbReference>
<dbReference type="InterPro" id="IPR000630">
    <property type="entry name" value="Ribosomal_uS8"/>
</dbReference>
<dbReference type="InterPro" id="IPR047863">
    <property type="entry name" value="Ribosomal_uS8_CS"/>
</dbReference>
<dbReference type="InterPro" id="IPR035987">
    <property type="entry name" value="Ribosomal_uS8_sf"/>
</dbReference>
<dbReference type="NCBIfam" id="NF001109">
    <property type="entry name" value="PRK00136.1"/>
    <property type="match status" value="1"/>
</dbReference>
<dbReference type="PANTHER" id="PTHR11758">
    <property type="entry name" value="40S RIBOSOMAL PROTEIN S15A"/>
    <property type="match status" value="1"/>
</dbReference>
<dbReference type="Pfam" id="PF00410">
    <property type="entry name" value="Ribosomal_S8"/>
    <property type="match status" value="1"/>
</dbReference>
<dbReference type="SUPFAM" id="SSF56047">
    <property type="entry name" value="Ribosomal protein S8"/>
    <property type="match status" value="1"/>
</dbReference>
<dbReference type="PROSITE" id="PS00053">
    <property type="entry name" value="RIBOSOMAL_S8"/>
    <property type="match status" value="1"/>
</dbReference>
<comment type="function">
    <text evidence="1">One of the primary rRNA binding proteins, it binds directly to 16S rRNA central domain where it helps coordinate assembly of the platform of the 30S subunit.</text>
</comment>
<comment type="subunit">
    <text evidence="1">Part of the 30S ribosomal subunit. Contacts proteins S5 and S12.</text>
</comment>
<comment type="similarity">
    <text evidence="1">Belongs to the universal ribosomal protein uS8 family.</text>
</comment>
<accession>A0RM25</accession>
<sequence length="131" mass="14755">MINDLISDGLTRIRNASMRRLDTTKLLHSNVVEATLKILANKSYIESYNVVEEGNKKFINVVLKYDERGRSVINELKRVSKPGRRVYQGRDEIKRFKNGYGTIIVSTSKGVLSNDEAHKAGVGGEVLCTVW</sequence>
<evidence type="ECO:0000255" key="1">
    <source>
        <dbReference type="HAMAP-Rule" id="MF_01302"/>
    </source>
</evidence>
<evidence type="ECO:0000305" key="2"/>
<organism>
    <name type="scientific">Campylobacter fetus subsp. fetus (strain 82-40)</name>
    <dbReference type="NCBI Taxonomy" id="360106"/>
    <lineage>
        <taxon>Bacteria</taxon>
        <taxon>Pseudomonadati</taxon>
        <taxon>Campylobacterota</taxon>
        <taxon>Epsilonproteobacteria</taxon>
        <taxon>Campylobacterales</taxon>
        <taxon>Campylobacteraceae</taxon>
        <taxon>Campylobacter</taxon>
    </lineage>
</organism>
<keyword id="KW-0687">Ribonucleoprotein</keyword>
<keyword id="KW-0689">Ribosomal protein</keyword>
<keyword id="KW-0694">RNA-binding</keyword>
<keyword id="KW-0699">rRNA-binding</keyword>
<proteinExistence type="inferred from homology"/>
<gene>
    <name evidence="1" type="primary">rpsH</name>
    <name type="ordered locus">CFF8240_0048</name>
</gene>
<name>RS8_CAMFF</name>
<feature type="chain" id="PRO_0000290816" description="Small ribosomal subunit protein uS8">
    <location>
        <begin position="1"/>
        <end position="131"/>
    </location>
</feature>